<evidence type="ECO:0000255" key="1"/>
<evidence type="ECO:0000255" key="2">
    <source>
        <dbReference type="PROSITE-ProRule" id="PRU00180"/>
    </source>
</evidence>
<evidence type="ECO:0000256" key="3">
    <source>
        <dbReference type="SAM" id="MobiDB-lite"/>
    </source>
</evidence>
<evidence type="ECO:0000269" key="4">
    <source>
    </source>
</evidence>
<evidence type="ECO:0000269" key="5">
    <source>
    </source>
</evidence>
<evidence type="ECO:0000303" key="6">
    <source>
    </source>
</evidence>
<evidence type="ECO:0000303" key="7">
    <source>
    </source>
</evidence>
<evidence type="ECO:0000305" key="8"/>
<evidence type="ECO:0000312" key="9">
    <source>
        <dbReference type="Araport" id="AT3G48500"/>
    </source>
</evidence>
<evidence type="ECO:0000312" key="10">
    <source>
        <dbReference type="EMBL" id="CAB62339.1"/>
    </source>
</evidence>
<evidence type="ECO:0000312" key="11">
    <source>
        <dbReference type="EMBL" id="CAB88331.1"/>
    </source>
</evidence>
<evidence type="ECO:0000312" key="12">
    <source>
        <dbReference type="Proteomes" id="UP000006548"/>
    </source>
</evidence>
<evidence type="ECO:0007744" key="13">
    <source>
    </source>
</evidence>
<comment type="subunit">
    <text evidence="4 5">Component of the transcriptionally active chromosome (TAC) complexes (PubMed:21949211). Interacts with PTAC7 (PubMed:23082802).</text>
</comment>
<comment type="subcellular location">
    <subcellularLocation>
        <location evidence="1">Plastid</location>
        <location evidence="1">Chloroplast</location>
    </subcellularLocation>
</comment>
<comment type="alternative products">
    <event type="alternative splicing"/>
    <isoform>
        <id>F4JF21-1</id>
        <name>1</name>
        <sequence type="displayed"/>
    </isoform>
    <isoform>
        <id>F4JF21-2</id>
        <name>2</name>
        <sequence type="described" ref="VSP_057776"/>
    </isoform>
</comment>
<comment type="sequence caution" evidence="8">
    <conflict type="erroneous initiation">
        <sequence resource="EMBL-CDS" id="AAM91538"/>
    </conflict>
    <text>Truncated N-terminus.</text>
</comment>
<comment type="sequence caution" evidence="8">
    <conflict type="erroneous gene model prediction">
        <sequence resource="EMBL-CDS" id="CAB62339"/>
    </conflict>
</comment>
<comment type="sequence caution" evidence="8">
    <conflict type="erroneous gene model prediction">
        <sequence resource="EMBL-CDS" id="CAB88331"/>
    </conflict>
</comment>
<reference key="1">
    <citation type="journal article" date="2000" name="Nature">
        <title>Sequence and analysis of chromosome 3 of the plant Arabidopsis thaliana.</title>
        <authorList>
            <person name="Salanoubat M."/>
            <person name="Lemcke K."/>
            <person name="Rieger M."/>
            <person name="Ansorge W."/>
            <person name="Unseld M."/>
            <person name="Fartmann B."/>
            <person name="Valle G."/>
            <person name="Bloecker H."/>
            <person name="Perez-Alonso M."/>
            <person name="Obermaier B."/>
            <person name="Delseny M."/>
            <person name="Boutry M."/>
            <person name="Grivell L.A."/>
            <person name="Mache R."/>
            <person name="Puigdomenech P."/>
            <person name="De Simone V."/>
            <person name="Choisne N."/>
            <person name="Artiguenave F."/>
            <person name="Robert C."/>
            <person name="Brottier P."/>
            <person name="Wincker P."/>
            <person name="Cattolico L."/>
            <person name="Weissenbach J."/>
            <person name="Saurin W."/>
            <person name="Quetier F."/>
            <person name="Schaefer M."/>
            <person name="Mueller-Auer S."/>
            <person name="Gabel C."/>
            <person name="Fuchs M."/>
            <person name="Benes V."/>
            <person name="Wurmbach E."/>
            <person name="Drzonek H."/>
            <person name="Erfle H."/>
            <person name="Jordan N."/>
            <person name="Bangert S."/>
            <person name="Wiedelmann R."/>
            <person name="Kranz H."/>
            <person name="Voss H."/>
            <person name="Holland R."/>
            <person name="Brandt P."/>
            <person name="Nyakatura G."/>
            <person name="Vezzi A."/>
            <person name="D'Angelo M."/>
            <person name="Pallavicini A."/>
            <person name="Toppo S."/>
            <person name="Simionati B."/>
            <person name="Conrad A."/>
            <person name="Hornischer K."/>
            <person name="Kauer G."/>
            <person name="Loehnert T.-H."/>
            <person name="Nordsiek G."/>
            <person name="Reichelt J."/>
            <person name="Scharfe M."/>
            <person name="Schoen O."/>
            <person name="Bargues M."/>
            <person name="Terol J."/>
            <person name="Climent J."/>
            <person name="Navarro P."/>
            <person name="Collado C."/>
            <person name="Perez-Perez A."/>
            <person name="Ottenwaelder B."/>
            <person name="Duchemin D."/>
            <person name="Cooke R."/>
            <person name="Laudie M."/>
            <person name="Berger-Llauro C."/>
            <person name="Purnelle B."/>
            <person name="Masuy D."/>
            <person name="de Haan M."/>
            <person name="Maarse A.C."/>
            <person name="Alcaraz J.-P."/>
            <person name="Cottet A."/>
            <person name="Casacuberta E."/>
            <person name="Monfort A."/>
            <person name="Argiriou A."/>
            <person name="Flores M."/>
            <person name="Liguori R."/>
            <person name="Vitale D."/>
            <person name="Mannhaupt G."/>
            <person name="Haase D."/>
            <person name="Schoof H."/>
            <person name="Rudd S."/>
            <person name="Zaccaria P."/>
            <person name="Mewes H.-W."/>
            <person name="Mayer K.F.X."/>
            <person name="Kaul S."/>
            <person name="Town C.D."/>
            <person name="Koo H.L."/>
            <person name="Tallon L.J."/>
            <person name="Jenkins J."/>
            <person name="Rooney T."/>
            <person name="Rizzo M."/>
            <person name="Walts A."/>
            <person name="Utterback T."/>
            <person name="Fujii C.Y."/>
            <person name="Shea T.P."/>
            <person name="Creasy T.H."/>
            <person name="Haas B."/>
            <person name="Maiti R."/>
            <person name="Wu D."/>
            <person name="Peterson J."/>
            <person name="Van Aken S."/>
            <person name="Pai G."/>
            <person name="Militscher J."/>
            <person name="Sellers P."/>
            <person name="Gill J.E."/>
            <person name="Feldblyum T.V."/>
            <person name="Preuss D."/>
            <person name="Lin X."/>
            <person name="Nierman W.C."/>
            <person name="Salzberg S.L."/>
            <person name="White O."/>
            <person name="Venter J.C."/>
            <person name="Fraser C.M."/>
            <person name="Kaneko T."/>
            <person name="Nakamura Y."/>
            <person name="Sato S."/>
            <person name="Kato T."/>
            <person name="Asamizu E."/>
            <person name="Sasamoto S."/>
            <person name="Kimura T."/>
            <person name="Idesawa K."/>
            <person name="Kawashima K."/>
            <person name="Kishida Y."/>
            <person name="Kiyokawa C."/>
            <person name="Kohara M."/>
            <person name="Matsumoto M."/>
            <person name="Matsuno A."/>
            <person name="Muraki A."/>
            <person name="Nakayama S."/>
            <person name="Nakazaki N."/>
            <person name="Shinpo S."/>
            <person name="Takeuchi C."/>
            <person name="Wada T."/>
            <person name="Watanabe A."/>
            <person name="Yamada M."/>
            <person name="Yasuda M."/>
            <person name="Tabata S."/>
        </authorList>
    </citation>
    <scope>NUCLEOTIDE SEQUENCE [LARGE SCALE GENOMIC DNA]</scope>
    <source>
        <strain>cv. Columbia</strain>
    </source>
</reference>
<reference key="2">
    <citation type="journal article" date="2017" name="Plant J.">
        <title>Araport11: a complete reannotation of the Arabidopsis thaliana reference genome.</title>
        <authorList>
            <person name="Cheng C.Y."/>
            <person name="Krishnakumar V."/>
            <person name="Chan A.P."/>
            <person name="Thibaud-Nissen F."/>
            <person name="Schobel S."/>
            <person name="Town C.D."/>
        </authorList>
    </citation>
    <scope>GENOME REANNOTATION</scope>
    <source>
        <strain>cv. Columbia</strain>
    </source>
</reference>
<reference key="3">
    <citation type="submission" date="2006-07" db="EMBL/GenBank/DDBJ databases">
        <title>Large-scale analysis of RIKEN Arabidopsis full-length (RAFL) cDNAs.</title>
        <authorList>
            <person name="Totoki Y."/>
            <person name="Seki M."/>
            <person name="Ishida J."/>
            <person name="Nakajima M."/>
            <person name="Enju A."/>
            <person name="Kamiya A."/>
            <person name="Narusaka M."/>
            <person name="Shin-i T."/>
            <person name="Nakagawa M."/>
            <person name="Sakamoto N."/>
            <person name="Oishi K."/>
            <person name="Kohara Y."/>
            <person name="Kobayashi M."/>
            <person name="Toyoda A."/>
            <person name="Sakaki Y."/>
            <person name="Sakurai T."/>
            <person name="Iida K."/>
            <person name="Akiyama K."/>
            <person name="Satou M."/>
            <person name="Toyoda T."/>
            <person name="Konagaya A."/>
            <person name="Carninci P."/>
            <person name="Kawai J."/>
            <person name="Hayashizaki Y."/>
            <person name="Shinozaki K."/>
        </authorList>
    </citation>
    <scope>NUCLEOTIDE SEQUENCE [LARGE SCALE MRNA] (ISOFORM 2)</scope>
    <source>
        <strain>cv. Columbia</strain>
    </source>
</reference>
<reference key="4">
    <citation type="journal article" date="2003" name="Science">
        <title>Empirical analysis of transcriptional activity in the Arabidopsis genome.</title>
        <authorList>
            <person name="Yamada K."/>
            <person name="Lim J."/>
            <person name="Dale J.M."/>
            <person name="Chen H."/>
            <person name="Shinn P."/>
            <person name="Palm C.J."/>
            <person name="Southwick A.M."/>
            <person name="Wu H.C."/>
            <person name="Kim C.J."/>
            <person name="Nguyen M."/>
            <person name="Pham P.K."/>
            <person name="Cheuk R.F."/>
            <person name="Karlin-Newmann G."/>
            <person name="Liu S.X."/>
            <person name="Lam B."/>
            <person name="Sakano H."/>
            <person name="Wu T."/>
            <person name="Yu G."/>
            <person name="Miranda M."/>
            <person name="Quach H.L."/>
            <person name="Tripp M."/>
            <person name="Chang C.H."/>
            <person name="Lee J.M."/>
            <person name="Toriumi M.J."/>
            <person name="Chan M.M."/>
            <person name="Tang C.C."/>
            <person name="Onodera C.S."/>
            <person name="Deng J.M."/>
            <person name="Akiyama K."/>
            <person name="Ansari Y."/>
            <person name="Arakawa T."/>
            <person name="Banh J."/>
            <person name="Banno F."/>
            <person name="Bowser L."/>
            <person name="Brooks S.Y."/>
            <person name="Carninci P."/>
            <person name="Chao Q."/>
            <person name="Choy N."/>
            <person name="Enju A."/>
            <person name="Goldsmith A.D."/>
            <person name="Gurjal M."/>
            <person name="Hansen N.F."/>
            <person name="Hayashizaki Y."/>
            <person name="Johnson-Hopson C."/>
            <person name="Hsuan V.W."/>
            <person name="Iida K."/>
            <person name="Karnes M."/>
            <person name="Khan S."/>
            <person name="Koesema E."/>
            <person name="Ishida J."/>
            <person name="Jiang P.X."/>
            <person name="Jones T."/>
            <person name="Kawai J."/>
            <person name="Kamiya A."/>
            <person name="Meyers C."/>
            <person name="Nakajima M."/>
            <person name="Narusaka M."/>
            <person name="Seki M."/>
            <person name="Sakurai T."/>
            <person name="Satou M."/>
            <person name="Tamse R."/>
            <person name="Vaysberg M."/>
            <person name="Wallender E.K."/>
            <person name="Wong C."/>
            <person name="Yamamura Y."/>
            <person name="Yuan S."/>
            <person name="Shinozaki K."/>
            <person name="Davis R.W."/>
            <person name="Theologis A."/>
            <person name="Ecker J.R."/>
        </authorList>
    </citation>
    <scope>NUCLEOTIDE SEQUENCE [LARGE SCALE MRNA] OF 56-668 (ISOFORM 2)</scope>
    <source>
        <strain>cv. Columbia</strain>
    </source>
</reference>
<reference key="5">
    <citation type="journal article" date="2006" name="Plant Cell">
        <title>pTAC2, -6, and -12 are components of the transcriptionally active plastid chromosome that are required for plastid gene expression.</title>
        <authorList>
            <person name="Pfalz J."/>
            <person name="Liere K."/>
            <person name="Kandlbinder A."/>
            <person name="Dietz K.-J."/>
            <person name="Oelmueller R."/>
        </authorList>
    </citation>
    <scope>NOMENCLATURE</scope>
</reference>
<reference key="6">
    <citation type="journal article" date="2009" name="Plant Physiol.">
        <title>Large-scale Arabidopsis phosphoproteome profiling reveals novel chloroplast kinase substrates and phosphorylation networks.</title>
        <authorList>
            <person name="Reiland S."/>
            <person name="Messerli G."/>
            <person name="Baerenfaller K."/>
            <person name="Gerrits B."/>
            <person name="Endler A."/>
            <person name="Grossmann J."/>
            <person name="Gruissem W."/>
            <person name="Baginsky S."/>
        </authorList>
    </citation>
    <scope>PHOSPHORYLATION [LARGE SCALE ANALYSIS] AT SER-434</scope>
    <scope>IDENTIFICATION BY MASS SPECTROMETRY [LARGE SCALE ANALYSIS]</scope>
</reference>
<reference key="7">
    <citation type="journal article" date="2011" name="Plant Physiol.">
        <title>Identification of essential subunits in the plastid-encoded RNA polymerase complex reveals building blocks for proper plastid development.</title>
        <authorList>
            <person name="Steiner S."/>
            <person name="Schroeter Y."/>
            <person name="Pfalz J."/>
            <person name="Pfannschmidt T."/>
        </authorList>
    </citation>
    <scope>IDENTIFICATION BY MASS SPECTROMETRY</scope>
    <scope>SUBUNIT</scope>
</reference>
<reference key="8">
    <citation type="journal article" date="2013" name="Physiol. Plantarum">
        <title>TAC7, an essential component of the plastid transcriptionally active chromosome complex, interacts with FLN1, TAC10, TAC12 and TAC14 to regulate chloroplast gene expression in Arabidopsis thaliana.</title>
        <authorList>
            <person name="Yu Q.-B."/>
            <person name="Lu Y."/>
            <person name="Ma Q."/>
            <person name="Zhao T.-T."/>
            <person name="Huang C."/>
            <person name="Zhao H.-F."/>
            <person name="Zhang X.-L."/>
            <person name="Lv R.-H."/>
            <person name="Yang Z.-N."/>
        </authorList>
    </citation>
    <scope>INTERACTION WITH PTAC7</scope>
</reference>
<accession>F4JF21</accession>
<accession>Q0WNC4</accession>
<accession>Q8L7P3</accession>
<accession>Q9M3G9</accession>
<accession>Q9SMP7</accession>
<sequence length="668" mass="78814">MQICQTKLNFTFPNPTNPNFCKPKALQWSPPRRISLLPCRGFSSDEFPVDETFLEKFGPKDKDTEDEARRRNWIERGWAPWEEILTPEADFARKSLNEGEEVPLQSPEAIEAFKMLRPSYRKKKIKEMGITEDEWYAKQFEIRGDKPPPLETSWAGPMVLRQIPPRDWPPRGWEVDRKELEFIREAHKLMAERVWLEDLDKDLRVGEDATVDKMCLERFKVFLKQYKEWVEDNKDRLEEESYKLDQDFYPGRRKRGKDYEDGMYELPFYYPGMVCEGTVTTLHLYQGAFVDIGGVHEGWVPIKGNDWFWIRHFIKVGMHVIVEITAKRDPYRFRFPLELRFVHPNIDHMIFNKFDFPPIFHRDGDTNPDEIRRDCGRPPEPRKDPGSKPEEEGLLSDHPYVDKLWQIHVAEQMILGDYEANPAKYEGKKLSELSDDEDFDEQKDIEYGEAYYKKTKLPKVILKTSVKELDLEAALTERQHHNKLMMEAKARGEGYKIDKLRRNIEMDEYDFLHWRRSLEEREALLRDISSRQALGLPLEEPGRYKPGSFFGKDQYDPTSALYQYDYWGEPKNSEISKQERMKDAHNKSIVGKGNVWYDMSYDDAIKQTIEKRKEGSTLASQEEETESEEEEEDDDDFDDFDYSILSDESSIGYSEQQPLVNGTQVLTD</sequence>
<protein>
    <recommendedName>
        <fullName evidence="6">Protein PLASTID TRANSCRIPTIONALLY ACTIVE 10</fullName>
        <shortName evidence="6">pTAC10</shortName>
    </recommendedName>
    <alternativeName>
        <fullName evidence="7">Plastid-encoded RNA polymerase-associated protein 3</fullName>
        <shortName evidence="7">PEP-associated protein 3</shortName>
    </alternativeName>
    <alternativeName>
        <fullName>Protein PIGMENT DEFECTIVE 312</fullName>
    </alternativeName>
</protein>
<gene>
    <name evidence="6" type="primary">PTAC10</name>
    <name evidence="7" type="synonym">PAP3</name>
    <name type="synonym">PDE312</name>
    <name evidence="6" type="synonym">TAC10</name>
    <name evidence="9" type="ordered locus">At3g48500</name>
    <name evidence="11" type="ORF">T29H11_270</name>
    <name evidence="10" type="ORF">T8P19.10</name>
</gene>
<dbReference type="EMBL" id="AL049659">
    <property type="protein sequence ID" value="CAB88331.1"/>
    <property type="status" value="ALT_SEQ"/>
    <property type="molecule type" value="Genomic_DNA"/>
</dbReference>
<dbReference type="EMBL" id="AL133315">
    <property type="protein sequence ID" value="CAB62339.1"/>
    <property type="status" value="ALT_SEQ"/>
    <property type="molecule type" value="Genomic_DNA"/>
</dbReference>
<dbReference type="EMBL" id="CP002686">
    <property type="protein sequence ID" value="AEE78423.1"/>
    <property type="molecule type" value="Genomic_DNA"/>
</dbReference>
<dbReference type="EMBL" id="CP002686">
    <property type="protein sequence ID" value="AEE78424.1"/>
    <property type="molecule type" value="Genomic_DNA"/>
</dbReference>
<dbReference type="EMBL" id="AK229521">
    <property type="protein sequence ID" value="BAF01376.1"/>
    <property type="molecule type" value="mRNA"/>
</dbReference>
<dbReference type="EMBL" id="AY128335">
    <property type="protein sequence ID" value="AAM91538.1"/>
    <property type="status" value="ALT_INIT"/>
    <property type="molecule type" value="mRNA"/>
</dbReference>
<dbReference type="PIR" id="T46194">
    <property type="entry name" value="T46194"/>
</dbReference>
<dbReference type="RefSeq" id="NP_001078259.1">
    <molecule id="F4JF21-2"/>
    <property type="nucleotide sequence ID" value="NM_001084790.1"/>
</dbReference>
<dbReference type="RefSeq" id="NP_190419.3">
    <molecule id="F4JF21-1"/>
    <property type="nucleotide sequence ID" value="NM_114708.5"/>
</dbReference>
<dbReference type="SMR" id="F4JF21"/>
<dbReference type="FunCoup" id="F4JF21">
    <property type="interactions" value="1052"/>
</dbReference>
<dbReference type="STRING" id="3702.F4JF21"/>
<dbReference type="iPTMnet" id="F4JF21"/>
<dbReference type="PaxDb" id="3702-AT3G48500.2"/>
<dbReference type="ProteomicsDB" id="248677">
    <molecule id="F4JF21-1"/>
</dbReference>
<dbReference type="EnsemblPlants" id="AT3G48500.1">
    <molecule id="F4JF21-1"/>
    <property type="protein sequence ID" value="AT3G48500.1"/>
    <property type="gene ID" value="AT3G48500"/>
</dbReference>
<dbReference type="EnsemblPlants" id="AT3G48500.2">
    <molecule id="F4JF21-2"/>
    <property type="protein sequence ID" value="AT3G48500.2"/>
    <property type="gene ID" value="AT3G48500"/>
</dbReference>
<dbReference type="GeneID" id="824009"/>
<dbReference type="Gramene" id="AT3G48500.1">
    <molecule id="F4JF21-1"/>
    <property type="protein sequence ID" value="AT3G48500.1"/>
    <property type="gene ID" value="AT3G48500"/>
</dbReference>
<dbReference type="Gramene" id="AT3G48500.2">
    <molecule id="F4JF21-2"/>
    <property type="protein sequence ID" value="AT3G48500.2"/>
    <property type="gene ID" value="AT3G48500"/>
</dbReference>
<dbReference type="KEGG" id="ath:AT3G48500"/>
<dbReference type="Araport" id="AT3G48500"/>
<dbReference type="TAIR" id="AT3G48500">
    <property type="gene designation" value="PDE312"/>
</dbReference>
<dbReference type="eggNOG" id="ENOG502QPXQ">
    <property type="taxonomic scope" value="Eukaryota"/>
</dbReference>
<dbReference type="InParanoid" id="F4JF21"/>
<dbReference type="OMA" id="DYPPIFH"/>
<dbReference type="PRO" id="PR:F4JF21"/>
<dbReference type="Proteomes" id="UP000006548">
    <property type="component" value="Chromosome 3"/>
</dbReference>
<dbReference type="ExpressionAtlas" id="F4JF21">
    <property type="expression patterns" value="baseline and differential"/>
</dbReference>
<dbReference type="GO" id="GO:0009507">
    <property type="term" value="C:chloroplast"/>
    <property type="evidence" value="ECO:0007005"/>
    <property type="project" value="TAIR"/>
</dbReference>
<dbReference type="GO" id="GO:0042644">
    <property type="term" value="C:chloroplast nucleoid"/>
    <property type="evidence" value="ECO:0007005"/>
    <property type="project" value="TAIR"/>
</dbReference>
<dbReference type="GO" id="GO:0009570">
    <property type="term" value="C:chloroplast stroma"/>
    <property type="evidence" value="ECO:0007005"/>
    <property type="project" value="TAIR"/>
</dbReference>
<dbReference type="GO" id="GO:0000427">
    <property type="term" value="C:plastid-encoded plastid RNA polymerase complex"/>
    <property type="evidence" value="ECO:0007669"/>
    <property type="project" value="InterPro"/>
</dbReference>
<dbReference type="GO" id="GO:0003723">
    <property type="term" value="F:RNA binding"/>
    <property type="evidence" value="ECO:0007669"/>
    <property type="project" value="InterPro"/>
</dbReference>
<dbReference type="InterPro" id="IPR012340">
    <property type="entry name" value="NA-bd_OB-fold"/>
</dbReference>
<dbReference type="InterPro" id="IPR044967">
    <property type="entry name" value="PTAC10"/>
</dbReference>
<dbReference type="InterPro" id="IPR003029">
    <property type="entry name" value="S1_domain"/>
</dbReference>
<dbReference type="PANTHER" id="PTHR36371">
    <property type="entry name" value="PROTEIN PLASTID TRANSCRIPTIONALLY ACTIVE 10"/>
    <property type="match status" value="1"/>
</dbReference>
<dbReference type="PANTHER" id="PTHR36371:SF1">
    <property type="entry name" value="PROTEIN PLASTID TRANSCRIPTIONALLY ACTIVE 10"/>
    <property type="match status" value="1"/>
</dbReference>
<dbReference type="SUPFAM" id="SSF50249">
    <property type="entry name" value="Nucleic acid-binding proteins"/>
    <property type="match status" value="1"/>
</dbReference>
<dbReference type="PROSITE" id="PS50126">
    <property type="entry name" value="S1"/>
    <property type="match status" value="1"/>
</dbReference>
<organism evidence="12">
    <name type="scientific">Arabidopsis thaliana</name>
    <name type="common">Mouse-ear cress</name>
    <dbReference type="NCBI Taxonomy" id="3702"/>
    <lineage>
        <taxon>Eukaryota</taxon>
        <taxon>Viridiplantae</taxon>
        <taxon>Streptophyta</taxon>
        <taxon>Embryophyta</taxon>
        <taxon>Tracheophyta</taxon>
        <taxon>Spermatophyta</taxon>
        <taxon>Magnoliopsida</taxon>
        <taxon>eudicotyledons</taxon>
        <taxon>Gunneridae</taxon>
        <taxon>Pentapetalae</taxon>
        <taxon>rosids</taxon>
        <taxon>malvids</taxon>
        <taxon>Brassicales</taxon>
        <taxon>Brassicaceae</taxon>
        <taxon>Camelineae</taxon>
        <taxon>Arabidopsis</taxon>
    </lineage>
</organism>
<proteinExistence type="evidence at protein level"/>
<name>PTA10_ARATH</name>
<feature type="transit peptide" description="Chloroplast" evidence="8">
    <location>
        <begin position="1"/>
        <end position="40"/>
    </location>
</feature>
<feature type="chain" id="PRO_0000433434" description="Protein PLASTID TRANSCRIPTIONALLY ACTIVE 10" evidence="1">
    <location>
        <begin position="41"/>
        <end position="668"/>
    </location>
</feature>
<feature type="domain" description="S1 motif" evidence="2">
    <location>
        <begin position="272"/>
        <end position="340"/>
    </location>
</feature>
<feature type="region of interest" description="Disordered" evidence="3">
    <location>
        <begin position="362"/>
        <end position="394"/>
    </location>
</feature>
<feature type="region of interest" description="Disordered" evidence="3">
    <location>
        <begin position="611"/>
        <end position="668"/>
    </location>
</feature>
<feature type="compositionally biased region" description="Basic and acidic residues" evidence="3">
    <location>
        <begin position="362"/>
        <end position="391"/>
    </location>
</feature>
<feature type="compositionally biased region" description="Acidic residues" evidence="3">
    <location>
        <begin position="621"/>
        <end position="641"/>
    </location>
</feature>
<feature type="compositionally biased region" description="Polar residues" evidence="3">
    <location>
        <begin position="646"/>
        <end position="668"/>
    </location>
</feature>
<feature type="modified residue" description="Phosphoserine" evidence="13">
    <location>
        <position position="434"/>
    </location>
</feature>
<feature type="splice variant" id="VSP_057776" description="In isoform 2.">
    <original>T</original>
    <variation>TVILRHIFFFRIYKNLNGNCFILLFLLFFQ</variation>
    <location>
        <position position="325"/>
    </location>
</feature>
<keyword id="KW-0025">Alternative splicing</keyword>
<keyword id="KW-0150">Chloroplast</keyword>
<keyword id="KW-0597">Phosphoprotein</keyword>
<keyword id="KW-0934">Plastid</keyword>
<keyword id="KW-1185">Reference proteome</keyword>
<keyword id="KW-0809">Transit peptide</keyword>